<name>IFD1_CAEEL</name>
<protein>
    <recommendedName>
        <fullName>Intermediate filament protein ifd-1</fullName>
    </recommendedName>
    <alternativeName>
        <fullName>Cel IF D1</fullName>
    </alternativeName>
    <alternativeName>
        <fullName>Intermediate filament protein D1</fullName>
        <shortName>IF-D1</shortName>
    </alternativeName>
</protein>
<evidence type="ECO:0000255" key="1">
    <source>
        <dbReference type="PROSITE-ProRule" id="PRU01187"/>
    </source>
</evidence>
<evidence type="ECO:0000255" key="2">
    <source>
        <dbReference type="PROSITE-ProRule" id="PRU01188"/>
    </source>
</evidence>
<evidence type="ECO:0000269" key="3">
    <source>
    </source>
</evidence>
<evidence type="ECO:0000305" key="4"/>
<evidence type="ECO:0000312" key="5">
    <source>
        <dbReference type="WormBase" id="R04E5.10"/>
    </source>
</evidence>
<accession>Q86DC6</accession>
<accession>Q9GYL1</accession>
<reference key="1">
    <citation type="journal article" date="1998" name="Science">
        <title>Genome sequence of the nematode C. elegans: a platform for investigating biology.</title>
        <authorList>
            <consortium name="The C. elegans sequencing consortium"/>
        </authorList>
    </citation>
    <scope>NUCLEOTIDE SEQUENCE [LARGE SCALE GENOMIC DNA]</scope>
    <scope>ALTERNATIVE SPLICING</scope>
    <source>
        <strain>Bristol N2</strain>
    </source>
</reference>
<reference key="2">
    <citation type="journal article" date="2001" name="Proc. Natl. Acad. Sci. U.S.A.">
        <title>Essential roles for four cytoplasmic intermediate filament proteins in Caenorhabditis elegans development.</title>
        <authorList>
            <person name="Karabinos A."/>
            <person name="Schmidt H."/>
            <person name="Harborth J."/>
            <person name="Schnabel R."/>
            <person name="Weber K."/>
        </authorList>
    </citation>
    <scope>FUNCTION</scope>
</reference>
<comment type="function">
    <text evidence="3">Cytoplasmic intermediate filaments provide mechanical strength to cells. Not essential protein.</text>
</comment>
<comment type="subcellular location">
    <subcellularLocation>
        <location evidence="4">Cytoplasm</location>
    </subcellularLocation>
</comment>
<comment type="similarity">
    <text evidence="2">Belongs to the intermediate filament family.</text>
</comment>
<proteinExistence type="inferred from homology"/>
<sequence length="575" mass="66700">MSKLNPRVAHNPVLSRIIESGRTNLPSGITSAGSLSAYAQAAAVTIRDNRDREKREIADLNNRLARYVEKVRFLEAQNRVLENDIGLFRQAAHIHTGKVRDYYDAEKTSLATLVREQEAKVSSAKQNIRKLEPEITTAIRTLASSLEHRQRVRSDKKEQLKHLSDLESETAYIKRLINDCDDEKSHLKTEISRIRGEIKRILALRDKERNGFSRSQTAAQDLLKKLNATISTHEIAIREEINKARRDSTDKNREFFHRELHMSMKEIRDQFESDSKKARKTWEEWYKKKITEIKKRSEKFSLTQNQAREEVLRIRSLLNELRTKISDADSMTQALSKRIEDMKFREDEELRMFEQSLTEKELAVTRMRDECAKLSVELETLVENQINLRSEIAHYRKLMEQAENLRTSYQSDFVIDTPSPLMRTSSHHYGSSYSLNVRDTHNKTVHHDNYDISSASTINTQQFRSYGKGDVKIIEHKDESIVIENSNSYKSKDLSNWKINHYVNGALTGTFILPVATHIHPHEKISIHSLKSPNLMDDIVATQIYSFDFSKNTKTVLLDDVDDEVGWYAHVSYSH</sequence>
<dbReference type="EMBL" id="FO080702">
    <property type="protein sequence ID" value="CCD65958.1"/>
    <property type="molecule type" value="Genomic_DNA"/>
</dbReference>
<dbReference type="EMBL" id="FO080702">
    <property type="protein sequence ID" value="CCD65959.1"/>
    <property type="molecule type" value="Genomic_DNA"/>
</dbReference>
<dbReference type="RefSeq" id="NP_001024831.1">
    <property type="nucleotide sequence ID" value="NM_001029660.3"/>
</dbReference>
<dbReference type="SMR" id="Q86DC6"/>
<dbReference type="BioGRID" id="52274">
    <property type="interactions" value="6"/>
</dbReference>
<dbReference type="DIP" id="DIP-26000N"/>
<dbReference type="FunCoup" id="Q86DC6">
    <property type="interactions" value="12"/>
</dbReference>
<dbReference type="IntAct" id="Q86DC6">
    <property type="interactions" value="2"/>
</dbReference>
<dbReference type="STRING" id="6239.R04E5.10a.1"/>
<dbReference type="iPTMnet" id="Q86DC6"/>
<dbReference type="PaxDb" id="6239-R04E5.10a"/>
<dbReference type="PeptideAtlas" id="Q86DC6"/>
<dbReference type="GeneID" id="187585"/>
<dbReference type="KEGG" id="cel:CELE_R04E5.10"/>
<dbReference type="AGR" id="WB:WBGene00002057"/>
<dbReference type="CTD" id="187585"/>
<dbReference type="WormBase" id="R04E5.10">
    <property type="protein sequence ID" value="CE30100"/>
    <property type="gene ID" value="WBGene00002057"/>
    <property type="gene designation" value="ifd-1"/>
</dbReference>
<dbReference type="eggNOG" id="KOG0977">
    <property type="taxonomic scope" value="Eukaryota"/>
</dbReference>
<dbReference type="GeneTree" id="ENSGT00970000196250"/>
<dbReference type="HOGENOM" id="CLU_032944_0_0_1"/>
<dbReference type="InParanoid" id="Q86DC6"/>
<dbReference type="OMA" id="WEEWYKK"/>
<dbReference type="OrthoDB" id="2441647at2759"/>
<dbReference type="PhylomeDB" id="Q86DC6"/>
<dbReference type="Reactome" id="R-CEL-2559584">
    <property type="pathway name" value="Formation of Senescence-Associated Heterochromatin Foci (SAHF)"/>
</dbReference>
<dbReference type="Reactome" id="R-CEL-4419969">
    <property type="pathway name" value="Depolymerization of the Nuclear Lamina"/>
</dbReference>
<dbReference type="Reactome" id="R-CEL-9013405">
    <property type="pathway name" value="RHOD GTPase cycle"/>
</dbReference>
<dbReference type="Reactome" id="R-CEL-9035034">
    <property type="pathway name" value="RHOF GTPase cycle"/>
</dbReference>
<dbReference type="SignaLink" id="Q86DC6"/>
<dbReference type="PRO" id="PR:Q86DC6"/>
<dbReference type="Proteomes" id="UP000001940">
    <property type="component" value="Chromosome X"/>
</dbReference>
<dbReference type="Bgee" id="WBGene00002057">
    <property type="expression patterns" value="Expressed in larva and 4 other cell types or tissues"/>
</dbReference>
<dbReference type="GO" id="GO:0005737">
    <property type="term" value="C:cytoplasm"/>
    <property type="evidence" value="ECO:0007669"/>
    <property type="project" value="UniProtKB-SubCell"/>
</dbReference>
<dbReference type="GO" id="GO:0005882">
    <property type="term" value="C:intermediate filament"/>
    <property type="evidence" value="ECO:0007669"/>
    <property type="project" value="UniProtKB-KW"/>
</dbReference>
<dbReference type="GO" id="GO:0005635">
    <property type="term" value="C:nuclear envelope"/>
    <property type="evidence" value="ECO:0000318"/>
    <property type="project" value="GO_Central"/>
</dbReference>
<dbReference type="GO" id="GO:0005652">
    <property type="term" value="C:nuclear lamina"/>
    <property type="evidence" value="ECO:0000318"/>
    <property type="project" value="GO_Central"/>
</dbReference>
<dbReference type="GO" id="GO:0005200">
    <property type="term" value="F:structural constituent of cytoskeleton"/>
    <property type="evidence" value="ECO:0000318"/>
    <property type="project" value="GO_Central"/>
</dbReference>
<dbReference type="GO" id="GO:0031507">
    <property type="term" value="P:heterochromatin formation"/>
    <property type="evidence" value="ECO:0000318"/>
    <property type="project" value="GO_Central"/>
</dbReference>
<dbReference type="GO" id="GO:0006998">
    <property type="term" value="P:nuclear envelope organization"/>
    <property type="evidence" value="ECO:0000318"/>
    <property type="project" value="GO_Central"/>
</dbReference>
<dbReference type="GO" id="GO:0007097">
    <property type="term" value="P:nuclear migration"/>
    <property type="evidence" value="ECO:0000318"/>
    <property type="project" value="GO_Central"/>
</dbReference>
<dbReference type="GO" id="GO:0051664">
    <property type="term" value="P:nuclear pore localization"/>
    <property type="evidence" value="ECO:0000318"/>
    <property type="project" value="GO_Central"/>
</dbReference>
<dbReference type="GO" id="GO:0090435">
    <property type="term" value="P:protein localization to nuclear envelope"/>
    <property type="evidence" value="ECO:0000318"/>
    <property type="project" value="GO_Central"/>
</dbReference>
<dbReference type="Gene3D" id="1.20.5.170">
    <property type="match status" value="1"/>
</dbReference>
<dbReference type="Gene3D" id="2.60.40.1260">
    <property type="entry name" value="Lamin Tail domain"/>
    <property type="match status" value="1"/>
</dbReference>
<dbReference type="InterPro" id="IPR039008">
    <property type="entry name" value="IF_rod_dom"/>
</dbReference>
<dbReference type="InterPro" id="IPR001322">
    <property type="entry name" value="Lamin_tail_dom"/>
</dbReference>
<dbReference type="InterPro" id="IPR036415">
    <property type="entry name" value="Lamin_tail_dom_sf"/>
</dbReference>
<dbReference type="PANTHER" id="PTHR45721:SF14">
    <property type="entry name" value="INTERMEDIATE FILAMENT PROTEIN IFD-1"/>
    <property type="match status" value="1"/>
</dbReference>
<dbReference type="PANTHER" id="PTHR45721">
    <property type="entry name" value="LAMIN DM0-RELATED"/>
    <property type="match status" value="1"/>
</dbReference>
<dbReference type="Pfam" id="PF00038">
    <property type="entry name" value="Filament"/>
    <property type="match status" value="1"/>
</dbReference>
<dbReference type="SMART" id="SM01391">
    <property type="entry name" value="Filament"/>
    <property type="match status" value="1"/>
</dbReference>
<dbReference type="SUPFAM" id="SSF64593">
    <property type="entry name" value="Intermediate filament protein, coiled coil region"/>
    <property type="match status" value="2"/>
</dbReference>
<dbReference type="SUPFAM" id="SSF74853">
    <property type="entry name" value="Lamin A/C globular tail domain"/>
    <property type="match status" value="1"/>
</dbReference>
<dbReference type="PROSITE" id="PS51842">
    <property type="entry name" value="IF_ROD_2"/>
    <property type="match status" value="1"/>
</dbReference>
<dbReference type="PROSITE" id="PS51841">
    <property type="entry name" value="LTD"/>
    <property type="match status" value="1"/>
</dbReference>
<keyword id="KW-0175">Coiled coil</keyword>
<keyword id="KW-0963">Cytoplasm</keyword>
<keyword id="KW-0403">Intermediate filament</keyword>
<keyword id="KW-1185">Reference proteome</keyword>
<feature type="chain" id="PRO_0000063843" description="Intermediate filament protein ifd-1">
    <location>
        <begin position="1"/>
        <end position="575"/>
    </location>
</feature>
<feature type="domain" description="IF rod" evidence="2">
    <location>
        <begin position="53"/>
        <end position="406"/>
    </location>
</feature>
<feature type="domain" description="LTD" evidence="1">
    <location>
        <begin position="459"/>
        <end position="575"/>
    </location>
</feature>
<feature type="region of interest" description="Head">
    <location>
        <begin position="1"/>
        <end position="56"/>
    </location>
</feature>
<feature type="region of interest" description="Coil 1A">
    <location>
        <begin position="57"/>
        <end position="88"/>
    </location>
</feature>
<feature type="region of interest" description="Linker 1">
    <location>
        <begin position="89"/>
        <end position="102"/>
    </location>
</feature>
<feature type="region of interest" description="Coil 1B">
    <location>
        <begin position="103"/>
        <end position="240"/>
    </location>
</feature>
<feature type="region of interest" description="Linker 12">
    <location>
        <begin position="241"/>
        <end position="258"/>
    </location>
</feature>
<feature type="region of interest" description="Coil 2">
    <location>
        <begin position="259"/>
        <end position="408"/>
    </location>
</feature>
<feature type="region of interest" description="Tail">
    <location>
        <begin position="409"/>
        <end position="572"/>
    </location>
</feature>
<organism>
    <name type="scientific">Caenorhabditis elegans</name>
    <dbReference type="NCBI Taxonomy" id="6239"/>
    <lineage>
        <taxon>Eukaryota</taxon>
        <taxon>Metazoa</taxon>
        <taxon>Ecdysozoa</taxon>
        <taxon>Nematoda</taxon>
        <taxon>Chromadorea</taxon>
        <taxon>Rhabditida</taxon>
        <taxon>Rhabditina</taxon>
        <taxon>Rhabditomorpha</taxon>
        <taxon>Rhabditoidea</taxon>
        <taxon>Rhabditidae</taxon>
        <taxon>Peloderinae</taxon>
        <taxon>Caenorhabditis</taxon>
    </lineage>
</organism>
<gene>
    <name evidence="5" type="primary">ifd-1</name>
    <name evidence="5" type="ORF">R04E5.10</name>
</gene>